<organism>
    <name type="scientific">Rattus norvegicus</name>
    <name type="common">Rat</name>
    <dbReference type="NCBI Taxonomy" id="10116"/>
    <lineage>
        <taxon>Eukaryota</taxon>
        <taxon>Metazoa</taxon>
        <taxon>Chordata</taxon>
        <taxon>Craniata</taxon>
        <taxon>Vertebrata</taxon>
        <taxon>Euteleostomi</taxon>
        <taxon>Mammalia</taxon>
        <taxon>Eutheria</taxon>
        <taxon>Euarchontoglires</taxon>
        <taxon>Glires</taxon>
        <taxon>Rodentia</taxon>
        <taxon>Myomorpha</taxon>
        <taxon>Muroidea</taxon>
        <taxon>Muridae</taxon>
        <taxon>Murinae</taxon>
        <taxon>Rattus</taxon>
    </lineage>
</organism>
<accession>P09495</accession>
<keyword id="KW-0007">Acetylation</keyword>
<keyword id="KW-0009">Actin-binding</keyword>
<keyword id="KW-0106">Calcium</keyword>
<keyword id="KW-0175">Coiled coil</keyword>
<keyword id="KW-0963">Cytoplasm</keyword>
<keyword id="KW-0206">Cytoskeleton</keyword>
<keyword id="KW-0479">Metal-binding</keyword>
<keyword id="KW-0514">Muscle protein</keyword>
<keyword id="KW-0597">Phosphoprotein</keyword>
<keyword id="KW-1185">Reference proteome</keyword>
<evidence type="ECO:0000250" key="1"/>
<evidence type="ECO:0000250" key="2">
    <source>
        <dbReference type="UniProtKB" id="P67936"/>
    </source>
</evidence>
<evidence type="ECO:0000256" key="3">
    <source>
        <dbReference type="SAM" id="MobiDB-lite"/>
    </source>
</evidence>
<evidence type="ECO:0000269" key="4">
    <source>
    </source>
</evidence>
<evidence type="ECO:0000269" key="5">
    <source ref="4"/>
</evidence>
<evidence type="ECO:0000305" key="6"/>
<evidence type="ECO:0007744" key="7">
    <source>
    </source>
</evidence>
<reference key="1">
    <citation type="journal article" date="1987" name="J. Biol. Chem.">
        <title>Isolation and characterization of cDNA clones encoding a low molecular weight nonmuscle tropomyosin isoform.</title>
        <authorList>
            <person name="Yamawaki-Kataoka Y."/>
            <person name="Helfman D.M."/>
        </authorList>
    </citation>
    <scope>NUCLEOTIDE SEQUENCE [MRNA]</scope>
</reference>
<reference key="2">
    <citation type="journal article" date="1990" name="J. Mol. Biol.">
        <title>Structure and complete nucleotide sequence of the gene encoding rat fibroblast tropomyosin 4.</title>
        <authorList>
            <person name="Lees-Miller J.P."/>
            <person name="Yan A."/>
            <person name="Helfman D.M."/>
        </authorList>
    </citation>
    <scope>NUCLEOTIDE SEQUENCE [GENOMIC DNA]</scope>
    <source>
        <tissue>Brain</tissue>
        <tissue>Liver</tissue>
    </source>
</reference>
<reference key="3">
    <citation type="journal article" date="1995" name="Proc. Natl. Acad. Sci. U.S.A.">
        <title>Specificity of dimer formation in tropomyosins: influence of alternatively spliced exons on homodimer and heterodimer assembly.</title>
        <authorList>
            <person name="Gimona M."/>
            <person name="Watakabe A."/>
            <person name="Helfman D.M."/>
        </authorList>
    </citation>
    <scope>FUNCTION</scope>
    <scope>SUBUNIT</scope>
    <scope>SUBCELLULAR LOCATION</scope>
</reference>
<reference key="4">
    <citation type="submission" date="2007-02" db="UniProtKB">
        <authorList>
            <person name="Lubec G."/>
            <person name="Chen W.-Q."/>
        </authorList>
    </citation>
    <scope>ACETYLATION AT ALA-2</scope>
    <scope>IDENTIFICATION BY MASS SPECTROMETRY</scope>
</reference>
<reference key="5">
    <citation type="journal article" date="2012" name="Nat. Commun.">
        <title>Quantitative maps of protein phosphorylation sites across 14 different rat organs and tissues.</title>
        <authorList>
            <person name="Lundby A."/>
            <person name="Secher A."/>
            <person name="Lage K."/>
            <person name="Nordsborg N.B."/>
            <person name="Dmytriyev A."/>
            <person name="Lundby C."/>
            <person name="Olsen J.V."/>
        </authorList>
    </citation>
    <scope>PHOSPHORYLATION [LARGE SCALE ANALYSIS] AT SER-6</scope>
    <scope>IDENTIFICATION BY MASS SPECTROMETRY [LARGE SCALE ANALYSIS]</scope>
</reference>
<sequence length="248" mass="28510">MAGLNSLEAVKRKIQALQQQADDAEDRAQGLQRELDGERERREKAEGDAAALNRRIQLVEEELDRAQERLATALQKLEEAEKAADESERGMKVIENRAMKDEEKMEIQEMQLKEAKHIAEEADRKYEEVARKLVILEGELERAEERAEVSELKSSDLEEELKNVTNNLKSLEAASEKYSEKEDKYEEEIKLLSDKLKEAETRAEFAERTVSKLEKTIDDLEEKLAQAKEENVGLHQTLDQTLNELNCI</sequence>
<comment type="function">
    <text evidence="2 4">Binds to actin filaments in muscle and non-muscle cells (PubMed:7568216). Plays a central role, in association with the troponin complex, in the calcium dependent regulation of vertebrate striated muscle contraction (By similarity). Smooth muscle contraction is regulated by interaction with caldesmon (By similarity). In non-muscle cells is implicated in stabilizing cytoskeleton actin filaments (By similarity). Binds calcium (By similarity). Plays a role in platelet biogenesis.</text>
</comment>
<comment type="subunit">
    <text evidence="4">Homodimer (PubMed:7568216). Heterodimer of an alpha (TPM1, TPM3 or TPM4) and a beta (TPM2) chain (PubMed:7568216).</text>
</comment>
<comment type="subcellular location">
    <subcellularLocation>
        <location evidence="4">Cytoplasm</location>
        <location evidence="4">Cytoskeleton</location>
    </subcellularLocation>
    <text evidence="4">Associates with F-actin stress fibers (PubMed:7568216).</text>
</comment>
<comment type="domain">
    <text>The molecule is in a coiled coil structure that is formed by 2 polypeptide chains. The sequence exhibits a prominent seven-residues periodicity.</text>
</comment>
<comment type="similarity">
    <text evidence="6">Belongs to the tropomyosin family.</text>
</comment>
<proteinExistence type="evidence at protein level"/>
<gene>
    <name type="primary">Tpm4</name>
</gene>
<protein>
    <recommendedName>
        <fullName>Tropomyosin alpha-4 chain</fullName>
    </recommendedName>
    <alternativeName>
        <fullName>Tropomyosin-4</fullName>
        <shortName>TM-4</shortName>
    </alternativeName>
</protein>
<name>TPM4_RAT</name>
<feature type="initiator methionine" description="Removed" evidence="5">
    <location>
        <position position="1"/>
    </location>
</feature>
<feature type="chain" id="PRO_0000205638" description="Tropomyosin alpha-4 chain">
    <location>
        <begin position="2"/>
        <end position="248"/>
    </location>
</feature>
<feature type="region of interest" description="Disordered" evidence="3">
    <location>
        <begin position="18"/>
        <end position="49"/>
    </location>
</feature>
<feature type="coiled-coil region" evidence="1">
    <location>
        <begin position="2"/>
        <end position="248"/>
    </location>
</feature>
<feature type="compositionally biased region" description="Basic and acidic residues" evidence="3">
    <location>
        <begin position="33"/>
        <end position="47"/>
    </location>
</feature>
<feature type="modified residue" description="N-acetylalanine" evidence="5">
    <location>
        <position position="2"/>
    </location>
</feature>
<feature type="modified residue" description="Phosphoserine" evidence="7">
    <location>
        <position position="6"/>
    </location>
</feature>
<feature type="modified residue" description="N6-acetyllysine" evidence="2">
    <location>
        <position position="177"/>
    </location>
</feature>
<feature type="modified residue" description="N6-acetyllysine" evidence="2">
    <location>
        <position position="215"/>
    </location>
</feature>
<feature type="modified residue" description="Phosphothreonine" evidence="2">
    <location>
        <position position="216"/>
    </location>
</feature>
<dbReference type="EMBL" id="J02780">
    <property type="protein sequence ID" value="AAA42291.1"/>
    <property type="molecule type" value="mRNA"/>
</dbReference>
<dbReference type="EMBL" id="Y00169">
    <property type="protein sequence ID" value="CAA68360.1"/>
    <property type="molecule type" value="Genomic_DNA"/>
</dbReference>
<dbReference type="PIR" id="S10623">
    <property type="entry name" value="S10623"/>
</dbReference>
<dbReference type="RefSeq" id="NP_036810.1">
    <property type="nucleotide sequence ID" value="NM_012678.2"/>
</dbReference>
<dbReference type="SMR" id="P09495"/>
<dbReference type="BioGRID" id="246969">
    <property type="interactions" value="6"/>
</dbReference>
<dbReference type="FunCoup" id="P09495">
    <property type="interactions" value="492"/>
</dbReference>
<dbReference type="IntAct" id="P09495">
    <property type="interactions" value="2"/>
</dbReference>
<dbReference type="MINT" id="P09495"/>
<dbReference type="STRING" id="10116.ENSRNOP00000021073"/>
<dbReference type="iPTMnet" id="P09495"/>
<dbReference type="PhosphoSitePlus" id="P09495"/>
<dbReference type="jPOST" id="P09495"/>
<dbReference type="PaxDb" id="10116-ENSRNOP00000021073"/>
<dbReference type="Ensembl" id="ENSRNOT00000089056.2">
    <property type="protein sequence ID" value="ENSRNOP00000072238.2"/>
    <property type="gene ID" value="ENSRNOG00000015496.7"/>
</dbReference>
<dbReference type="GeneID" id="24852"/>
<dbReference type="KEGG" id="rno:24852"/>
<dbReference type="UCSC" id="RGD:3899">
    <property type="organism name" value="rat"/>
</dbReference>
<dbReference type="AGR" id="RGD:3899"/>
<dbReference type="CTD" id="7171"/>
<dbReference type="RGD" id="3899">
    <property type="gene designation" value="Tpm4"/>
</dbReference>
<dbReference type="eggNOG" id="KOG1003">
    <property type="taxonomic scope" value="Eukaryota"/>
</dbReference>
<dbReference type="GeneTree" id="ENSGT01030000234542"/>
<dbReference type="HOGENOM" id="CLU_055027_3_0_1"/>
<dbReference type="InParanoid" id="P09495"/>
<dbReference type="OMA" id="DIMMANS"/>
<dbReference type="OrthoDB" id="128924at2759"/>
<dbReference type="PhylomeDB" id="P09495"/>
<dbReference type="TreeFam" id="TF351519"/>
<dbReference type="Reactome" id="R-RNO-390522">
    <property type="pathway name" value="Striated Muscle Contraction"/>
</dbReference>
<dbReference type="Reactome" id="R-RNO-445355">
    <property type="pathway name" value="Smooth Muscle Contraction"/>
</dbReference>
<dbReference type="Reactome" id="R-RNO-9013424">
    <property type="pathway name" value="RHOV GTPase cycle"/>
</dbReference>
<dbReference type="PRO" id="PR:P09495"/>
<dbReference type="Proteomes" id="UP000002494">
    <property type="component" value="Chromosome 16"/>
</dbReference>
<dbReference type="Bgee" id="ENSRNOG00000015496">
    <property type="expression patterns" value="Expressed in lung and 19 other cell types or tissues"/>
</dbReference>
<dbReference type="ExpressionAtlas" id="P09495">
    <property type="expression patterns" value="baseline and differential"/>
</dbReference>
<dbReference type="GO" id="GO:0015629">
    <property type="term" value="C:actin cytoskeleton"/>
    <property type="evidence" value="ECO:0000314"/>
    <property type="project" value="UniProtKB"/>
</dbReference>
<dbReference type="GO" id="GO:0005884">
    <property type="term" value="C:actin filament"/>
    <property type="evidence" value="ECO:0000318"/>
    <property type="project" value="GO_Central"/>
</dbReference>
<dbReference type="GO" id="GO:0030863">
    <property type="term" value="C:cortical cytoskeleton"/>
    <property type="evidence" value="ECO:0000266"/>
    <property type="project" value="RGD"/>
</dbReference>
<dbReference type="GO" id="GO:0005737">
    <property type="term" value="C:cytoplasm"/>
    <property type="evidence" value="ECO:0000266"/>
    <property type="project" value="RGD"/>
</dbReference>
<dbReference type="GO" id="GO:0002102">
    <property type="term" value="C:podosome"/>
    <property type="evidence" value="ECO:0000266"/>
    <property type="project" value="RGD"/>
</dbReference>
<dbReference type="GO" id="GO:0001725">
    <property type="term" value="C:stress fiber"/>
    <property type="evidence" value="ECO:0000266"/>
    <property type="project" value="RGD"/>
</dbReference>
<dbReference type="GO" id="GO:0051015">
    <property type="term" value="F:actin filament binding"/>
    <property type="evidence" value="ECO:0000314"/>
    <property type="project" value="UniProtKB"/>
</dbReference>
<dbReference type="GO" id="GO:0042802">
    <property type="term" value="F:identical protein binding"/>
    <property type="evidence" value="ECO:0000314"/>
    <property type="project" value="UniProtKB"/>
</dbReference>
<dbReference type="GO" id="GO:0046872">
    <property type="term" value="F:metal ion binding"/>
    <property type="evidence" value="ECO:0007669"/>
    <property type="project" value="UniProtKB-KW"/>
</dbReference>
<dbReference type="GO" id="GO:0046982">
    <property type="term" value="F:protein heterodimerization activity"/>
    <property type="evidence" value="ECO:0000314"/>
    <property type="project" value="UniProtKB"/>
</dbReference>
<dbReference type="GO" id="GO:0042803">
    <property type="term" value="F:protein homodimerization activity"/>
    <property type="evidence" value="ECO:0000314"/>
    <property type="project" value="UniProtKB"/>
</dbReference>
<dbReference type="GO" id="GO:0007015">
    <property type="term" value="P:actin filament organization"/>
    <property type="evidence" value="ECO:0000318"/>
    <property type="project" value="GO_Central"/>
</dbReference>
<dbReference type="GO" id="GO:0006936">
    <property type="term" value="P:muscle contraction"/>
    <property type="evidence" value="ECO:0000318"/>
    <property type="project" value="GO_Central"/>
</dbReference>
<dbReference type="GO" id="GO:0030220">
    <property type="term" value="P:platelet formation"/>
    <property type="evidence" value="ECO:0000250"/>
    <property type="project" value="UniProtKB"/>
</dbReference>
<dbReference type="FunFam" id="1.20.5.170:FF:000001">
    <property type="entry name" value="Tropomyosin alpha-1 chain isoform 1"/>
    <property type="match status" value="1"/>
</dbReference>
<dbReference type="FunFam" id="1.20.5.340:FF:000001">
    <property type="entry name" value="Tropomyosin alpha-1 chain isoform 2"/>
    <property type="match status" value="1"/>
</dbReference>
<dbReference type="FunFam" id="1.20.5.370:FF:000004">
    <property type="entry name" value="tropomyosin alpha-1 chain isoform X1"/>
    <property type="match status" value="1"/>
</dbReference>
<dbReference type="Gene3D" id="1.20.5.170">
    <property type="match status" value="1"/>
</dbReference>
<dbReference type="Gene3D" id="1.20.5.370">
    <property type="match status" value="1"/>
</dbReference>
<dbReference type="InterPro" id="IPR000533">
    <property type="entry name" value="Tropomyosin"/>
</dbReference>
<dbReference type="InterPro" id="IPR014751">
    <property type="entry name" value="XRCC4-like_C"/>
</dbReference>
<dbReference type="PANTHER" id="PTHR19269">
    <property type="entry name" value="TROPOMYOSIN"/>
    <property type="match status" value="1"/>
</dbReference>
<dbReference type="Pfam" id="PF00261">
    <property type="entry name" value="Tropomyosin"/>
    <property type="match status" value="1"/>
</dbReference>
<dbReference type="PRINTS" id="PR00194">
    <property type="entry name" value="TROPOMYOSIN"/>
</dbReference>
<dbReference type="SUPFAM" id="SSF57997">
    <property type="entry name" value="Tropomyosin"/>
    <property type="match status" value="1"/>
</dbReference>
<dbReference type="PROSITE" id="PS00326">
    <property type="entry name" value="TROPOMYOSIN"/>
    <property type="match status" value="1"/>
</dbReference>